<organism>
    <name type="scientific">Clostridium perfringens (strain 13 / Type A)</name>
    <dbReference type="NCBI Taxonomy" id="195102"/>
    <lineage>
        <taxon>Bacteria</taxon>
        <taxon>Bacillati</taxon>
        <taxon>Bacillota</taxon>
        <taxon>Clostridia</taxon>
        <taxon>Eubacteriales</taxon>
        <taxon>Clostridiaceae</taxon>
        <taxon>Clostridium</taxon>
    </lineage>
</organism>
<keyword id="KW-0414">Isoprene biosynthesis</keyword>
<keyword id="KW-0460">Magnesium</keyword>
<keyword id="KW-0479">Metal-binding</keyword>
<keyword id="KW-1185">Reference proteome</keyword>
<keyword id="KW-0784">Thiamine biosynthesis</keyword>
<keyword id="KW-0786">Thiamine pyrophosphate</keyword>
<keyword id="KW-0808">Transferase</keyword>
<comment type="function">
    <text evidence="1">Catalyzes the acyloin condensation reaction between C atoms 2 and 3 of pyruvate and glyceraldehyde 3-phosphate to yield 1-deoxy-D-xylulose-5-phosphate (DXP).</text>
</comment>
<comment type="catalytic activity">
    <reaction evidence="1">
        <text>D-glyceraldehyde 3-phosphate + pyruvate + H(+) = 1-deoxy-D-xylulose 5-phosphate + CO2</text>
        <dbReference type="Rhea" id="RHEA:12605"/>
        <dbReference type="ChEBI" id="CHEBI:15361"/>
        <dbReference type="ChEBI" id="CHEBI:15378"/>
        <dbReference type="ChEBI" id="CHEBI:16526"/>
        <dbReference type="ChEBI" id="CHEBI:57792"/>
        <dbReference type="ChEBI" id="CHEBI:59776"/>
        <dbReference type="EC" id="2.2.1.7"/>
    </reaction>
</comment>
<comment type="cofactor">
    <cofactor evidence="1">
        <name>Mg(2+)</name>
        <dbReference type="ChEBI" id="CHEBI:18420"/>
    </cofactor>
    <text evidence="1">Binds 1 Mg(2+) ion per subunit.</text>
</comment>
<comment type="cofactor">
    <cofactor evidence="1">
        <name>thiamine diphosphate</name>
        <dbReference type="ChEBI" id="CHEBI:58937"/>
    </cofactor>
    <text evidence="1">Binds 1 thiamine pyrophosphate per subunit.</text>
</comment>
<comment type="pathway">
    <text evidence="1">Metabolic intermediate biosynthesis; 1-deoxy-D-xylulose 5-phosphate biosynthesis; 1-deoxy-D-xylulose 5-phosphate from D-glyceraldehyde 3-phosphate and pyruvate: step 1/1.</text>
</comment>
<comment type="subunit">
    <text evidence="1">Homodimer.</text>
</comment>
<comment type="similarity">
    <text evidence="1">Belongs to the transketolase family. DXPS subfamily.</text>
</comment>
<protein>
    <recommendedName>
        <fullName evidence="1">1-deoxy-D-xylulose-5-phosphate synthase</fullName>
        <ecNumber evidence="1">2.2.1.7</ecNumber>
    </recommendedName>
    <alternativeName>
        <fullName evidence="1">1-deoxyxylulose-5-phosphate synthase</fullName>
        <shortName evidence="1">DXP synthase</shortName>
        <shortName evidence="1">DXPS</shortName>
    </alternativeName>
</protein>
<accession>Q8XJE1</accession>
<feature type="chain" id="PRO_0000189106" description="1-deoxy-D-xylulose-5-phosphate synthase">
    <location>
        <begin position="1"/>
        <end position="619"/>
    </location>
</feature>
<feature type="binding site" evidence="1">
    <location>
        <position position="74"/>
    </location>
    <ligand>
        <name>thiamine diphosphate</name>
        <dbReference type="ChEBI" id="CHEBI:58937"/>
    </ligand>
</feature>
<feature type="binding site" evidence="1">
    <location>
        <begin position="115"/>
        <end position="117"/>
    </location>
    <ligand>
        <name>thiamine diphosphate</name>
        <dbReference type="ChEBI" id="CHEBI:58937"/>
    </ligand>
</feature>
<feature type="binding site" evidence="1">
    <location>
        <position position="146"/>
    </location>
    <ligand>
        <name>Mg(2+)</name>
        <dbReference type="ChEBI" id="CHEBI:18420"/>
    </ligand>
</feature>
<feature type="binding site" evidence="1">
    <location>
        <begin position="147"/>
        <end position="148"/>
    </location>
    <ligand>
        <name>thiamine diphosphate</name>
        <dbReference type="ChEBI" id="CHEBI:58937"/>
    </ligand>
</feature>
<feature type="binding site" evidence="1">
    <location>
        <position position="175"/>
    </location>
    <ligand>
        <name>Mg(2+)</name>
        <dbReference type="ChEBI" id="CHEBI:18420"/>
    </ligand>
</feature>
<feature type="binding site" evidence="1">
    <location>
        <position position="175"/>
    </location>
    <ligand>
        <name>thiamine diphosphate</name>
        <dbReference type="ChEBI" id="CHEBI:58937"/>
    </ligand>
</feature>
<feature type="binding site" evidence="1">
    <location>
        <position position="285"/>
    </location>
    <ligand>
        <name>thiamine diphosphate</name>
        <dbReference type="ChEBI" id="CHEBI:58937"/>
    </ligand>
</feature>
<feature type="binding site" evidence="1">
    <location>
        <position position="365"/>
    </location>
    <ligand>
        <name>thiamine diphosphate</name>
        <dbReference type="ChEBI" id="CHEBI:58937"/>
    </ligand>
</feature>
<proteinExistence type="inferred from homology"/>
<gene>
    <name evidence="1" type="primary">dxs</name>
    <name type="ordered locus">CPE1819</name>
</gene>
<sequence>MSEVLQRITDPKEIKDLDEKELEILAEDLREFLIESVSNTGGHFASNLGVIDLTVALFKNFDFSEDRIIWDVGHQSYAYKILTGRKDKFNTLRQYGGLCGFPKRTESEYDFFATGHSSTSLSSAAGMARAQRLLGKDNKVIAVIGDGALTGGMALEALNDIGYRKDNLIIILNDNQMSICKNVGGLATYLNKLRMGVGYNKLKSDIGSTLDTTSLGKRVKNSLSKLKDGIKKIVVPSMYFEDIGLKYFGIVDGHNIRELNEVLSIAKNIKGPVIIHTVTKKGKGYELAEKNPNKYHGVSPFDLGEGVISKFSSRNYSSTFGEEMIKLAKNDDKVVAITAAMPDGTGLKDFREEFPDRFFDVGIAEQHAVTLAAGMAAEGLKPFFAVYSTFLQRAYDQVLHDVCIQKLPVTLCLDRAGLVGEDGETHQGIFDISFLSPMPNMTIVAPKCIDEMEVILKWASNFNAPLAIRYPRGGDIDVNLKPLSKIEYGKWEKVQEGEKIAIVATGKMVQHAMIAAQKIKEEKNIDILIINATFIKPIDKELLNSLSKDGFKIVTIEDNIKKGGFGEGVLEYLNEIGHKEKIVTLAFNDKFIEHGKPDILYKINGLDAEGIKNTLIELL</sequence>
<dbReference type="EC" id="2.2.1.7" evidence="1"/>
<dbReference type="EMBL" id="BA000016">
    <property type="protein sequence ID" value="BAB81525.1"/>
    <property type="molecule type" value="Genomic_DNA"/>
</dbReference>
<dbReference type="RefSeq" id="WP_011010622.1">
    <property type="nucleotide sequence ID" value="NC_003366.1"/>
</dbReference>
<dbReference type="SMR" id="Q8XJE1"/>
<dbReference type="STRING" id="195102.gene:10491083"/>
<dbReference type="KEGG" id="cpe:CPE1819"/>
<dbReference type="HOGENOM" id="CLU_009227_1_4_9"/>
<dbReference type="UniPathway" id="UPA00064">
    <property type="reaction ID" value="UER00091"/>
</dbReference>
<dbReference type="Proteomes" id="UP000000818">
    <property type="component" value="Chromosome"/>
</dbReference>
<dbReference type="GO" id="GO:0005829">
    <property type="term" value="C:cytosol"/>
    <property type="evidence" value="ECO:0007669"/>
    <property type="project" value="TreeGrafter"/>
</dbReference>
<dbReference type="GO" id="GO:0008661">
    <property type="term" value="F:1-deoxy-D-xylulose-5-phosphate synthase activity"/>
    <property type="evidence" value="ECO:0007669"/>
    <property type="project" value="UniProtKB-UniRule"/>
</dbReference>
<dbReference type="GO" id="GO:0000287">
    <property type="term" value="F:magnesium ion binding"/>
    <property type="evidence" value="ECO:0007669"/>
    <property type="project" value="UniProtKB-UniRule"/>
</dbReference>
<dbReference type="GO" id="GO:0030976">
    <property type="term" value="F:thiamine pyrophosphate binding"/>
    <property type="evidence" value="ECO:0007669"/>
    <property type="project" value="UniProtKB-UniRule"/>
</dbReference>
<dbReference type="GO" id="GO:0052865">
    <property type="term" value="P:1-deoxy-D-xylulose 5-phosphate biosynthetic process"/>
    <property type="evidence" value="ECO:0007669"/>
    <property type="project" value="UniProtKB-UniPathway"/>
</dbReference>
<dbReference type="GO" id="GO:0019288">
    <property type="term" value="P:isopentenyl diphosphate biosynthetic process, methylerythritol 4-phosphate pathway"/>
    <property type="evidence" value="ECO:0007669"/>
    <property type="project" value="TreeGrafter"/>
</dbReference>
<dbReference type="GO" id="GO:0016114">
    <property type="term" value="P:terpenoid biosynthetic process"/>
    <property type="evidence" value="ECO:0007669"/>
    <property type="project" value="UniProtKB-UniRule"/>
</dbReference>
<dbReference type="GO" id="GO:0009228">
    <property type="term" value="P:thiamine biosynthetic process"/>
    <property type="evidence" value="ECO:0007669"/>
    <property type="project" value="UniProtKB-UniRule"/>
</dbReference>
<dbReference type="CDD" id="cd02007">
    <property type="entry name" value="TPP_DXS"/>
    <property type="match status" value="1"/>
</dbReference>
<dbReference type="CDD" id="cd07033">
    <property type="entry name" value="TPP_PYR_DXS_TK_like"/>
    <property type="match status" value="1"/>
</dbReference>
<dbReference type="FunFam" id="3.40.50.970:FF:000005">
    <property type="entry name" value="1-deoxy-D-xylulose-5-phosphate synthase"/>
    <property type="match status" value="1"/>
</dbReference>
<dbReference type="Gene3D" id="3.40.50.920">
    <property type="match status" value="1"/>
</dbReference>
<dbReference type="Gene3D" id="3.40.50.970">
    <property type="match status" value="2"/>
</dbReference>
<dbReference type="HAMAP" id="MF_00315">
    <property type="entry name" value="DXP_synth"/>
    <property type="match status" value="1"/>
</dbReference>
<dbReference type="InterPro" id="IPR005477">
    <property type="entry name" value="Dxylulose-5-P_synthase"/>
</dbReference>
<dbReference type="InterPro" id="IPR029061">
    <property type="entry name" value="THDP-binding"/>
</dbReference>
<dbReference type="InterPro" id="IPR009014">
    <property type="entry name" value="Transketo_C/PFOR_II"/>
</dbReference>
<dbReference type="InterPro" id="IPR005475">
    <property type="entry name" value="Transketolase-like_Pyr-bd"/>
</dbReference>
<dbReference type="InterPro" id="IPR020826">
    <property type="entry name" value="Transketolase_BS"/>
</dbReference>
<dbReference type="InterPro" id="IPR033248">
    <property type="entry name" value="Transketolase_C"/>
</dbReference>
<dbReference type="InterPro" id="IPR049557">
    <property type="entry name" value="Transketolase_CS"/>
</dbReference>
<dbReference type="NCBIfam" id="TIGR00204">
    <property type="entry name" value="dxs"/>
    <property type="match status" value="1"/>
</dbReference>
<dbReference type="NCBIfam" id="NF003933">
    <property type="entry name" value="PRK05444.2-2"/>
    <property type="match status" value="1"/>
</dbReference>
<dbReference type="PANTHER" id="PTHR43322">
    <property type="entry name" value="1-D-DEOXYXYLULOSE 5-PHOSPHATE SYNTHASE-RELATED"/>
    <property type="match status" value="1"/>
</dbReference>
<dbReference type="PANTHER" id="PTHR43322:SF5">
    <property type="entry name" value="1-DEOXY-D-XYLULOSE-5-PHOSPHATE SYNTHASE, CHLOROPLASTIC"/>
    <property type="match status" value="1"/>
</dbReference>
<dbReference type="Pfam" id="PF13292">
    <property type="entry name" value="DXP_synthase_N"/>
    <property type="match status" value="1"/>
</dbReference>
<dbReference type="Pfam" id="PF02779">
    <property type="entry name" value="Transket_pyr"/>
    <property type="match status" value="1"/>
</dbReference>
<dbReference type="Pfam" id="PF02780">
    <property type="entry name" value="Transketolase_C"/>
    <property type="match status" value="1"/>
</dbReference>
<dbReference type="SMART" id="SM00861">
    <property type="entry name" value="Transket_pyr"/>
    <property type="match status" value="1"/>
</dbReference>
<dbReference type="SUPFAM" id="SSF52518">
    <property type="entry name" value="Thiamin diphosphate-binding fold (THDP-binding)"/>
    <property type="match status" value="2"/>
</dbReference>
<dbReference type="SUPFAM" id="SSF52922">
    <property type="entry name" value="TK C-terminal domain-like"/>
    <property type="match status" value="1"/>
</dbReference>
<dbReference type="PROSITE" id="PS00801">
    <property type="entry name" value="TRANSKETOLASE_1"/>
    <property type="match status" value="1"/>
</dbReference>
<dbReference type="PROSITE" id="PS00802">
    <property type="entry name" value="TRANSKETOLASE_2"/>
    <property type="match status" value="1"/>
</dbReference>
<reference key="1">
    <citation type="journal article" date="2002" name="Proc. Natl. Acad. Sci. U.S.A.">
        <title>Complete genome sequence of Clostridium perfringens, an anaerobic flesh-eater.</title>
        <authorList>
            <person name="Shimizu T."/>
            <person name="Ohtani K."/>
            <person name="Hirakawa H."/>
            <person name="Ohshima K."/>
            <person name="Yamashita A."/>
            <person name="Shiba T."/>
            <person name="Ogasawara N."/>
            <person name="Hattori M."/>
            <person name="Kuhara S."/>
            <person name="Hayashi H."/>
        </authorList>
    </citation>
    <scope>NUCLEOTIDE SEQUENCE [LARGE SCALE GENOMIC DNA]</scope>
    <source>
        <strain>13 / Type A</strain>
    </source>
</reference>
<evidence type="ECO:0000255" key="1">
    <source>
        <dbReference type="HAMAP-Rule" id="MF_00315"/>
    </source>
</evidence>
<name>DXS_CLOPE</name>